<sequence>MKLTLWTYEGPPHVGAMRVATAMKDLQLVLHGPQGDTYADLLFTMIERRNARPPVSFSTFEASHMGTDTAILLKDALAAAHARYKPQAMAVALTCTAELLQDDPNGISRALNLPVPVVPLELPSYSRKENYGADETFRALVRALAVPMERTPEVTCNLLGATALGFRHRDDVAEVTKLLATMGIKVNVCAPLGASPDDLRKLGQAHFNVLMYPETGESAARHLERACKQPFTKIVPIGVGATRDFLAEVSKITGLPVVTDESTLRQPWWSASVDSTYLTGKRVFIFGDGTHVIAAARIAAKEVGFEVVGMGCYNREMARPLRTAAAEYGLEALITDDYLEVEKAIEAAAPELILGTQMERNIAKKLGLPCAVISAPVHVQDFPARYAPQMGFEGANVLFDTWVHPLVMGLEEHLLTMFREDFEFHDAAGASHHGGKAVAREESPVAPADLAPAATSDTPAAPSPVVVTQASGEIRWMPEAERELRKIPFFVRGKAKRNTELYAAHKGVCDITVETLYEAKAHYAR</sequence>
<comment type="function">
    <text evidence="1 3 4">Component of the dark-operative protochlorophyllide reductase (DPOR) that uses Mg-ATP and reduced ferredoxin to reduce ring D of protochlorophyllide (Pchlide) to form chlorophyllide a (Chlide). This reaction is light-independent. The NB-protein (BchN-BchB) is the catalytic component of the complex.</text>
</comment>
<comment type="catalytic activity">
    <reaction evidence="1 3">
        <text>chlorophyllide a + oxidized 2[4Fe-4S]-[ferredoxin] + 2 ADP + 2 phosphate = protochlorophyllide a + reduced 2[4Fe-4S]-[ferredoxin] + 2 ATP + 2 H2O</text>
        <dbReference type="Rhea" id="RHEA:28202"/>
        <dbReference type="Rhea" id="RHEA-COMP:10002"/>
        <dbReference type="Rhea" id="RHEA-COMP:10004"/>
        <dbReference type="ChEBI" id="CHEBI:15377"/>
        <dbReference type="ChEBI" id="CHEBI:30616"/>
        <dbReference type="ChEBI" id="CHEBI:33722"/>
        <dbReference type="ChEBI" id="CHEBI:33723"/>
        <dbReference type="ChEBI" id="CHEBI:43474"/>
        <dbReference type="ChEBI" id="CHEBI:83348"/>
        <dbReference type="ChEBI" id="CHEBI:83350"/>
        <dbReference type="ChEBI" id="CHEBI:456216"/>
        <dbReference type="EC" id="1.3.7.7"/>
    </reaction>
</comment>
<comment type="cofactor">
    <cofactor evidence="1 4">
        <name>[4Fe-4S] cluster</name>
        <dbReference type="ChEBI" id="CHEBI:49883"/>
    </cofactor>
    <text evidence="1 4">Binds 1 [4Fe-4S] cluster per heterodimer (PubMed:20400946). The cluster is bound at the heterodimer interface by residues from both subunits (PubMed:20400946).</text>
</comment>
<comment type="pathway">
    <text evidence="1">Porphyrin-containing compound metabolism; bacteriochlorophyll biosynthesis (light-independent).</text>
</comment>
<comment type="subunit">
    <text evidence="1 4">Protochlorophyllide reductase is composed of three subunits; BchL, BchN and BchB. Forms a heterotetramer of two BchB and two BchN subunits (PubMed:20400946).</text>
</comment>
<comment type="interaction">
    <interactant intactId="EBI-9017546">
        <id>P26163</id>
    </interactant>
    <interactant intactId="EBI-9017544">
        <id>P26164</id>
        <label>bchN</label>
    </interactant>
    <organismsDiffer>false</organismsDiffer>
    <experiments>3</experiments>
</comment>
<comment type="similarity">
    <text evidence="1">Belongs to the ChlB/BchB/BchZ family.</text>
</comment>
<gene>
    <name evidence="1" type="primary">bchB</name>
    <name type="synonym">bchK</name>
    <name type="ordered locus">RCAP_rcc00664</name>
</gene>
<proteinExistence type="evidence at protein level"/>
<reference key="1">
    <citation type="journal article" date="1993" name="J. Bacteriol.">
        <title>bchFNBH bacteriochlorophyll synthesis genes of Rhodobacter capsulatus and identification of the third subunit of light-independent protochlorophyllide reductase in bacteria and plants.</title>
        <authorList>
            <person name="Burke D.H."/>
            <person name="Alberti M."/>
            <person name="Hearst J.E."/>
        </authorList>
    </citation>
    <scope>NUCLEOTIDE SEQUENCE [GENOMIC DNA]</scope>
    <source>
        <strain>ATCC BAA-309 / NBRC 16581 / SB1003</strain>
    </source>
</reference>
<reference key="2">
    <citation type="journal article" date="2010" name="J. Bacteriol.">
        <title>Complete genome sequence of the photosynthetic purple nonsulfur bacterium Rhodobacter capsulatus SB 1003.</title>
        <authorList>
            <person name="Strnad H."/>
            <person name="Lapidus A."/>
            <person name="Paces J."/>
            <person name="Ulbrich P."/>
            <person name="Vlcek C."/>
            <person name="Paces V."/>
            <person name="Haselkorn R."/>
        </authorList>
    </citation>
    <scope>NUCLEOTIDE SEQUENCE [LARGE SCALE GENOMIC DNA]</scope>
    <source>
        <strain>ATCC BAA-309 / NBRC 16581 / SB1003</strain>
    </source>
</reference>
<reference key="3">
    <citation type="journal article" date="2000" name="J. Biol. Chem.">
        <title>Reconstitution of light-independent protochlorophyllide reductase from purified bchL and bchN-bchB subunits. In vitro confirmation of nitrogenase-like features of a bacteriochlorophyll biosynthesis enzyme.</title>
        <authorList>
            <person name="Fujita Y."/>
            <person name="Bauer C.E."/>
        </authorList>
    </citation>
    <scope>PROTEIN SEQUENCE OF 1-6</scope>
    <scope>CHARACTERIZATION</scope>
    <source>
        <strain>SB1003 / CB1029</strain>
    </source>
</reference>
<reference key="4">
    <citation type="unpublished observations" date="2001-07">
        <authorList>
            <person name="Fujita Y."/>
        </authorList>
    </citation>
    <scope>CHARACTERIZATION</scope>
</reference>
<reference key="5">
    <citation type="journal article" date="2008" name="FEBS Lett.">
        <title>NB-protein (BchN-BchB) of dark-operative protochlorophyllide reductase is the catalytic component containing oxygen-tolerant Fe-S clusters.</title>
        <authorList>
            <person name="Nomata J."/>
            <person name="Ogawa T."/>
            <person name="Kitashima M."/>
            <person name="Inoue K."/>
            <person name="Fujita Y."/>
        </authorList>
    </citation>
    <scope>FUNCTION</scope>
    <scope>CATALYTIC ACTIVITY</scope>
</reference>
<reference key="6">
    <citation type="journal article" date="2010" name="Nature">
        <title>X-ray crystal structure of the light-independent protochlorophyllide reductase.</title>
        <authorList>
            <person name="Muraki N."/>
            <person name="Nomata J."/>
            <person name="Ebata K."/>
            <person name="Mizoguchi T."/>
            <person name="Shiba T."/>
            <person name="Tamiaki H."/>
            <person name="Kurisu G."/>
            <person name="Fujita Y."/>
        </authorList>
    </citation>
    <scope>X-RAY CRYSTALLOGRAPHY (2.3 ANGSTROMS) IN COMPLEX WITH BCHN SUBUNIT; SUBSTRATE AND 4FE-4S CLUSTER AND OF MUTANTS ALA-36 AND CYS-36</scope>
    <scope>FUNCTION</scope>
    <scope>SUBUNIT</scope>
    <scope>COFACTOR</scope>
    <scope>REACTION MECHANISM</scope>
    <scope>ACTIVE SITE</scope>
    <scope>MUTAGENESIS OF ASP-36; CYS-95; ASP-274; MET-408 AND LEU-410</scope>
</reference>
<organism>
    <name type="scientific">Rhodobacter capsulatus (strain ATCC BAA-309 / NBRC 16581 / SB1003)</name>
    <dbReference type="NCBI Taxonomy" id="272942"/>
    <lineage>
        <taxon>Bacteria</taxon>
        <taxon>Pseudomonadati</taxon>
        <taxon>Pseudomonadota</taxon>
        <taxon>Alphaproteobacteria</taxon>
        <taxon>Rhodobacterales</taxon>
        <taxon>Rhodobacter group</taxon>
        <taxon>Rhodobacter</taxon>
    </lineage>
</organism>
<protein>
    <recommendedName>
        <fullName evidence="1">Light-independent protochlorophyllide reductase subunit B</fullName>
        <shortName evidence="1">DPOR subunit B</shortName>
        <shortName evidence="1">LI-POR subunit B</shortName>
        <ecNumber evidence="1 3">1.3.7.7</ecNumber>
    </recommendedName>
</protein>
<evidence type="ECO:0000255" key="1">
    <source>
        <dbReference type="HAMAP-Rule" id="MF_00353"/>
    </source>
</evidence>
<evidence type="ECO:0000256" key="2">
    <source>
        <dbReference type="SAM" id="MobiDB-lite"/>
    </source>
</evidence>
<evidence type="ECO:0000269" key="3">
    <source>
    </source>
</evidence>
<evidence type="ECO:0000269" key="4">
    <source>
    </source>
</evidence>
<evidence type="ECO:0007829" key="5">
    <source>
        <dbReference type="PDB" id="3AEK"/>
    </source>
</evidence>
<feature type="chain" id="PRO_0000219800" description="Light-independent protochlorophyllide reductase subunit B">
    <location>
        <begin position="1"/>
        <end position="525"/>
    </location>
</feature>
<feature type="region of interest" description="Disordered" evidence="2">
    <location>
        <begin position="433"/>
        <end position="464"/>
    </location>
</feature>
<feature type="compositionally biased region" description="Low complexity" evidence="2">
    <location>
        <begin position="444"/>
        <end position="464"/>
    </location>
</feature>
<feature type="active site" description="Proton donor" evidence="1 4">
    <location>
        <position position="274"/>
    </location>
</feature>
<feature type="binding site" evidence="4">
    <location>
        <position position="36"/>
    </location>
    <ligand>
        <name>[4Fe-4S] cluster</name>
        <dbReference type="ChEBI" id="CHEBI:49883"/>
        <note>ligand shared with heterodimeric partner</note>
    </ligand>
</feature>
<feature type="binding site" evidence="4">
    <location>
        <begin position="409"/>
        <end position="410"/>
    </location>
    <ligand>
        <name>substrate</name>
    </ligand>
</feature>
<feature type="mutagenesis site" description="Retains 13% activity." evidence="4">
    <original>D</original>
    <variation>A</variation>
    <location>
        <position position="36"/>
    </location>
</feature>
<feature type="mutagenesis site" description="Almost no enzymatic activity." evidence="4">
    <original>D</original>
    <variation>C</variation>
    <variation>S</variation>
    <location>
        <position position="36"/>
    </location>
</feature>
<feature type="mutagenesis site" description="Does not form heterotetramers." evidence="4">
    <original>C</original>
    <variation>A</variation>
    <location>
        <position position="95"/>
    </location>
</feature>
<feature type="mutagenesis site" description="Almost no enzymatic activity." evidence="4">
    <original>D</original>
    <variation>A</variation>
    <location>
        <position position="274"/>
    </location>
</feature>
<feature type="mutagenesis site" description="Retains 85% activity." evidence="4">
    <original>M</original>
    <variation>A</variation>
    <location>
        <position position="408"/>
    </location>
</feature>
<feature type="mutagenesis site" description="Almost no enzymatic activity." evidence="4">
    <original>L</original>
    <variation>A</variation>
    <location>
        <position position="410"/>
    </location>
</feature>
<feature type="strand" evidence="5">
    <location>
        <begin position="2"/>
        <end position="5"/>
    </location>
</feature>
<feature type="helix" evidence="5">
    <location>
        <begin position="12"/>
        <end position="20"/>
    </location>
</feature>
<feature type="strand" evidence="5">
    <location>
        <begin position="23"/>
        <end position="31"/>
    </location>
</feature>
<feature type="helix" evidence="5">
    <location>
        <begin position="36"/>
        <end position="39"/>
    </location>
</feature>
<feature type="helix" evidence="5">
    <location>
        <begin position="40"/>
        <end position="45"/>
    </location>
</feature>
<feature type="strand" evidence="5">
    <location>
        <begin position="54"/>
        <end position="57"/>
    </location>
</feature>
<feature type="helix" evidence="5">
    <location>
        <begin position="62"/>
        <end position="64"/>
    </location>
</feature>
<feature type="helix" evidence="5">
    <location>
        <begin position="68"/>
        <end position="84"/>
    </location>
</feature>
<feature type="strand" evidence="5">
    <location>
        <begin position="87"/>
        <end position="93"/>
    </location>
</feature>
<feature type="helix" evidence="5">
    <location>
        <begin position="97"/>
        <end position="99"/>
    </location>
</feature>
<feature type="helix" evidence="5">
    <location>
        <begin position="104"/>
        <end position="111"/>
    </location>
</feature>
<feature type="strand" evidence="5">
    <location>
        <begin position="117"/>
        <end position="119"/>
    </location>
</feature>
<feature type="turn" evidence="5">
    <location>
        <begin position="124"/>
        <end position="126"/>
    </location>
</feature>
<feature type="helix" evidence="5">
    <location>
        <begin position="129"/>
        <end position="144"/>
    </location>
</feature>
<feature type="strand" evidence="5">
    <location>
        <begin position="155"/>
        <end position="161"/>
    </location>
</feature>
<feature type="helix" evidence="5">
    <location>
        <begin position="168"/>
        <end position="180"/>
    </location>
</feature>
<feature type="turn" evidence="5">
    <location>
        <begin position="181"/>
        <end position="183"/>
    </location>
</feature>
<feature type="strand" evidence="5">
    <location>
        <begin position="185"/>
        <end position="191"/>
    </location>
</feature>
<feature type="helix" evidence="5">
    <location>
        <begin position="196"/>
        <end position="200"/>
    </location>
</feature>
<feature type="helix" evidence="5">
    <location>
        <begin position="201"/>
        <end position="204"/>
    </location>
</feature>
<feature type="strand" evidence="5">
    <location>
        <begin position="205"/>
        <end position="210"/>
    </location>
</feature>
<feature type="helix" evidence="5">
    <location>
        <begin position="213"/>
        <end position="226"/>
    </location>
</feature>
<feature type="helix" evidence="5">
    <location>
        <begin position="239"/>
        <end position="253"/>
    </location>
</feature>
<feature type="helix" evidence="5">
    <location>
        <begin position="266"/>
        <end position="271"/>
    </location>
</feature>
<feature type="helix" evidence="5">
    <location>
        <begin position="273"/>
        <end position="278"/>
    </location>
</feature>
<feature type="strand" evidence="5">
    <location>
        <begin position="282"/>
        <end position="285"/>
    </location>
</feature>
<feature type="helix" evidence="5">
    <location>
        <begin position="289"/>
        <end position="301"/>
    </location>
</feature>
<feature type="strand" evidence="5">
    <location>
        <begin position="306"/>
        <end position="313"/>
    </location>
</feature>
<feature type="helix" evidence="5">
    <location>
        <begin position="315"/>
        <end position="317"/>
    </location>
</feature>
<feature type="helix" evidence="5">
    <location>
        <begin position="318"/>
        <end position="327"/>
    </location>
</feature>
<feature type="helix" evidence="5">
    <location>
        <begin position="338"/>
        <end position="348"/>
    </location>
</feature>
<feature type="strand" evidence="5">
    <location>
        <begin position="351"/>
        <end position="355"/>
    </location>
</feature>
<feature type="helix" evidence="5">
    <location>
        <begin position="357"/>
        <end position="366"/>
    </location>
</feature>
<feature type="strand" evidence="5">
    <location>
        <begin position="370"/>
        <end position="372"/>
    </location>
</feature>
<feature type="strand" evidence="5">
    <location>
        <begin position="374"/>
        <end position="376"/>
    </location>
</feature>
<feature type="helix" evidence="5">
    <location>
        <begin position="379"/>
        <end position="381"/>
    </location>
</feature>
<feature type="helix" evidence="5">
    <location>
        <begin position="391"/>
        <end position="403"/>
    </location>
</feature>
<feature type="helix" evidence="5">
    <location>
        <begin position="409"/>
        <end position="417"/>
    </location>
</feature>
<keyword id="KW-0002">3D-structure</keyword>
<keyword id="KW-0004">4Fe-4S</keyword>
<keyword id="KW-0067">ATP-binding</keyword>
<keyword id="KW-0077">Bacteriochlorophyll biosynthesis</keyword>
<keyword id="KW-0149">Chlorophyll biosynthesis</keyword>
<keyword id="KW-0903">Direct protein sequencing</keyword>
<keyword id="KW-0408">Iron</keyword>
<keyword id="KW-0411">Iron-sulfur</keyword>
<keyword id="KW-0479">Metal-binding</keyword>
<keyword id="KW-0547">Nucleotide-binding</keyword>
<keyword id="KW-0560">Oxidoreductase</keyword>
<keyword id="KW-0602">Photosynthesis</keyword>
<keyword id="KW-1185">Reference proteome</keyword>
<name>BCHB_RHOCB</name>
<dbReference type="EC" id="1.3.7.7" evidence="1 3"/>
<dbReference type="EMBL" id="Z11165">
    <property type="protein sequence ID" value="CAA77525.1"/>
    <property type="molecule type" value="Genomic_DNA"/>
</dbReference>
<dbReference type="EMBL" id="CP001312">
    <property type="protein sequence ID" value="ADE84429.1"/>
    <property type="molecule type" value="Genomic_DNA"/>
</dbReference>
<dbReference type="PIR" id="C49851">
    <property type="entry name" value="C49851"/>
</dbReference>
<dbReference type="RefSeq" id="WP_013066408.1">
    <property type="nucleotide sequence ID" value="NC_014034.1"/>
</dbReference>
<dbReference type="PDB" id="3AEK">
    <property type="method" value="X-ray"/>
    <property type="resolution" value="2.30 A"/>
    <property type="chains" value="B/D=1-525"/>
</dbReference>
<dbReference type="PDB" id="3AEQ">
    <property type="method" value="X-ray"/>
    <property type="resolution" value="2.90 A"/>
    <property type="chains" value="B/D=1-525"/>
</dbReference>
<dbReference type="PDB" id="3AER">
    <property type="method" value="X-ray"/>
    <property type="resolution" value="2.80 A"/>
    <property type="chains" value="B/D=1-525"/>
</dbReference>
<dbReference type="PDB" id="3AES">
    <property type="method" value="X-ray"/>
    <property type="resolution" value="2.50 A"/>
    <property type="chains" value="B/D=1-525"/>
</dbReference>
<dbReference type="PDB" id="3AET">
    <property type="method" value="X-ray"/>
    <property type="resolution" value="2.91 A"/>
    <property type="chains" value="B/D=1-525"/>
</dbReference>
<dbReference type="PDB" id="3AEU">
    <property type="method" value="X-ray"/>
    <property type="resolution" value="2.90 A"/>
    <property type="chains" value="B/D=1-525"/>
</dbReference>
<dbReference type="PDBsum" id="3AEK"/>
<dbReference type="PDBsum" id="3AEQ"/>
<dbReference type="PDBsum" id="3AER"/>
<dbReference type="PDBsum" id="3AES"/>
<dbReference type="PDBsum" id="3AET"/>
<dbReference type="PDBsum" id="3AEU"/>
<dbReference type="SMR" id="P26163"/>
<dbReference type="DIP" id="DIP-59276N"/>
<dbReference type="IntAct" id="P26163">
    <property type="interactions" value="1"/>
</dbReference>
<dbReference type="STRING" id="272942.RCAP_rcc00664"/>
<dbReference type="GeneID" id="31489610"/>
<dbReference type="KEGG" id="rcp:RCAP_rcc00664"/>
<dbReference type="eggNOG" id="COG2710">
    <property type="taxonomic scope" value="Bacteria"/>
</dbReference>
<dbReference type="HOGENOM" id="CLU_025470_0_0_5"/>
<dbReference type="OrthoDB" id="5717231at2"/>
<dbReference type="BioCyc" id="MetaCyc:MONOMER-13270"/>
<dbReference type="BRENDA" id="1.3.1.33">
    <property type="organism ID" value="5381"/>
</dbReference>
<dbReference type="BRENDA" id="1.3.7.7">
    <property type="organism ID" value="5381"/>
</dbReference>
<dbReference type="UniPathway" id="UPA00671"/>
<dbReference type="EvolutionaryTrace" id="P26163"/>
<dbReference type="Proteomes" id="UP000002361">
    <property type="component" value="Chromosome"/>
</dbReference>
<dbReference type="GO" id="GO:0051539">
    <property type="term" value="F:4 iron, 4 sulfur cluster binding"/>
    <property type="evidence" value="ECO:0007669"/>
    <property type="project" value="UniProtKB-UniRule"/>
</dbReference>
<dbReference type="GO" id="GO:0005524">
    <property type="term" value="F:ATP binding"/>
    <property type="evidence" value="ECO:0007669"/>
    <property type="project" value="UniProtKB-UniRule"/>
</dbReference>
<dbReference type="GO" id="GO:0046872">
    <property type="term" value="F:metal ion binding"/>
    <property type="evidence" value="ECO:0007669"/>
    <property type="project" value="UniProtKB-KW"/>
</dbReference>
<dbReference type="GO" id="GO:0016730">
    <property type="term" value="F:oxidoreductase activity, acting on iron-sulfur proteins as donors"/>
    <property type="evidence" value="ECO:0007669"/>
    <property type="project" value="InterPro"/>
</dbReference>
<dbReference type="GO" id="GO:0016636">
    <property type="term" value="F:oxidoreductase activity, acting on the CH-CH group of donors, iron-sulfur protein as acceptor"/>
    <property type="evidence" value="ECO:0007669"/>
    <property type="project" value="UniProtKB-UniRule"/>
</dbReference>
<dbReference type="GO" id="GO:0036070">
    <property type="term" value="P:light-independent bacteriochlorophyll biosynthetic process"/>
    <property type="evidence" value="ECO:0007669"/>
    <property type="project" value="UniProtKB-UniRule"/>
</dbReference>
<dbReference type="GO" id="GO:0019685">
    <property type="term" value="P:photosynthesis, dark reaction"/>
    <property type="evidence" value="ECO:0007669"/>
    <property type="project" value="InterPro"/>
</dbReference>
<dbReference type="Gene3D" id="1.20.89.20">
    <property type="match status" value="1"/>
</dbReference>
<dbReference type="Gene3D" id="3.40.50.1980">
    <property type="entry name" value="Nitrogenase molybdenum iron protein domain"/>
    <property type="match status" value="3"/>
</dbReference>
<dbReference type="Gene3D" id="1.10.8.550">
    <property type="entry name" value="Proto-chlorophyllide reductase 57 kD subunit B"/>
    <property type="match status" value="1"/>
</dbReference>
<dbReference type="HAMAP" id="MF_00353">
    <property type="entry name" value="ChlB_BchB"/>
    <property type="match status" value="1"/>
</dbReference>
<dbReference type="InterPro" id="IPR050152">
    <property type="entry name" value="ChlB/BchB/BchZ"/>
</dbReference>
<dbReference type="InterPro" id="IPR013580">
    <property type="entry name" value="LI-POR_suB-like_C"/>
</dbReference>
<dbReference type="InterPro" id="IPR000510">
    <property type="entry name" value="Nase/OxRdtase_comp1"/>
</dbReference>
<dbReference type="InterPro" id="IPR042298">
    <property type="entry name" value="P-CP_red_C"/>
</dbReference>
<dbReference type="InterPro" id="IPR005969">
    <property type="entry name" value="Protochl_reductB"/>
</dbReference>
<dbReference type="InterPro" id="IPR016209">
    <property type="entry name" value="Protochlorophyllide_Rdtase"/>
</dbReference>
<dbReference type="NCBIfam" id="TIGR01278">
    <property type="entry name" value="DPOR_BchB"/>
    <property type="match status" value="1"/>
</dbReference>
<dbReference type="PANTHER" id="PTHR33712">
    <property type="entry name" value="LIGHT-INDEPENDENT PROTOCHLOROPHYLLIDE REDUCTASE SUBUNIT B"/>
    <property type="match status" value="1"/>
</dbReference>
<dbReference type="PANTHER" id="PTHR33712:SF7">
    <property type="entry name" value="LIGHT-INDEPENDENT PROTOCHLOROPHYLLIDE REDUCTASE SUBUNIT B"/>
    <property type="match status" value="1"/>
</dbReference>
<dbReference type="Pfam" id="PF00148">
    <property type="entry name" value="Oxidored_nitro"/>
    <property type="match status" value="1"/>
</dbReference>
<dbReference type="Pfam" id="PF08369">
    <property type="entry name" value="PCP_red"/>
    <property type="match status" value="1"/>
</dbReference>
<dbReference type="PIRSF" id="PIRSF000163">
    <property type="entry name" value="PCP_ChlB"/>
    <property type="match status" value="1"/>
</dbReference>
<dbReference type="SUPFAM" id="SSF53807">
    <property type="entry name" value="Helical backbone' metal receptor"/>
    <property type="match status" value="1"/>
</dbReference>
<accession>P26163</accession>
<accession>D5ANS5</accession>